<gene>
    <name evidence="1" type="primary">rpsS</name>
    <name type="ordered locus">Sputw3181_0160</name>
</gene>
<proteinExistence type="inferred from homology"/>
<dbReference type="EMBL" id="CP000503">
    <property type="protein sequence ID" value="ABM23013.1"/>
    <property type="molecule type" value="Genomic_DNA"/>
</dbReference>
<dbReference type="RefSeq" id="WP_006083596.1">
    <property type="nucleotide sequence ID" value="NC_008750.1"/>
</dbReference>
<dbReference type="SMR" id="A1REB8"/>
<dbReference type="GeneID" id="94726190"/>
<dbReference type="KEGG" id="shw:Sputw3181_0160"/>
<dbReference type="HOGENOM" id="CLU_144911_0_1_6"/>
<dbReference type="Proteomes" id="UP000002597">
    <property type="component" value="Chromosome"/>
</dbReference>
<dbReference type="GO" id="GO:0005737">
    <property type="term" value="C:cytoplasm"/>
    <property type="evidence" value="ECO:0007669"/>
    <property type="project" value="UniProtKB-ARBA"/>
</dbReference>
<dbReference type="GO" id="GO:0015935">
    <property type="term" value="C:small ribosomal subunit"/>
    <property type="evidence" value="ECO:0007669"/>
    <property type="project" value="InterPro"/>
</dbReference>
<dbReference type="GO" id="GO:0019843">
    <property type="term" value="F:rRNA binding"/>
    <property type="evidence" value="ECO:0007669"/>
    <property type="project" value="UniProtKB-UniRule"/>
</dbReference>
<dbReference type="GO" id="GO:0003735">
    <property type="term" value="F:structural constituent of ribosome"/>
    <property type="evidence" value="ECO:0007669"/>
    <property type="project" value="InterPro"/>
</dbReference>
<dbReference type="GO" id="GO:0000028">
    <property type="term" value="P:ribosomal small subunit assembly"/>
    <property type="evidence" value="ECO:0007669"/>
    <property type="project" value="TreeGrafter"/>
</dbReference>
<dbReference type="GO" id="GO:0006412">
    <property type="term" value="P:translation"/>
    <property type="evidence" value="ECO:0007669"/>
    <property type="project" value="UniProtKB-UniRule"/>
</dbReference>
<dbReference type="FunFam" id="3.30.860.10:FF:000001">
    <property type="entry name" value="30S ribosomal protein S19"/>
    <property type="match status" value="1"/>
</dbReference>
<dbReference type="Gene3D" id="3.30.860.10">
    <property type="entry name" value="30s Ribosomal Protein S19, Chain A"/>
    <property type="match status" value="1"/>
</dbReference>
<dbReference type="HAMAP" id="MF_00531">
    <property type="entry name" value="Ribosomal_uS19"/>
    <property type="match status" value="1"/>
</dbReference>
<dbReference type="InterPro" id="IPR002222">
    <property type="entry name" value="Ribosomal_uS19"/>
</dbReference>
<dbReference type="InterPro" id="IPR005732">
    <property type="entry name" value="Ribosomal_uS19_bac-type"/>
</dbReference>
<dbReference type="InterPro" id="IPR020934">
    <property type="entry name" value="Ribosomal_uS19_CS"/>
</dbReference>
<dbReference type="InterPro" id="IPR023575">
    <property type="entry name" value="Ribosomal_uS19_SF"/>
</dbReference>
<dbReference type="NCBIfam" id="TIGR01050">
    <property type="entry name" value="rpsS_bact"/>
    <property type="match status" value="1"/>
</dbReference>
<dbReference type="PANTHER" id="PTHR11880">
    <property type="entry name" value="RIBOSOMAL PROTEIN S19P FAMILY MEMBER"/>
    <property type="match status" value="1"/>
</dbReference>
<dbReference type="PANTHER" id="PTHR11880:SF8">
    <property type="entry name" value="SMALL RIBOSOMAL SUBUNIT PROTEIN US19M"/>
    <property type="match status" value="1"/>
</dbReference>
<dbReference type="Pfam" id="PF00203">
    <property type="entry name" value="Ribosomal_S19"/>
    <property type="match status" value="1"/>
</dbReference>
<dbReference type="PIRSF" id="PIRSF002144">
    <property type="entry name" value="Ribosomal_S19"/>
    <property type="match status" value="1"/>
</dbReference>
<dbReference type="PRINTS" id="PR00975">
    <property type="entry name" value="RIBOSOMALS19"/>
</dbReference>
<dbReference type="SUPFAM" id="SSF54570">
    <property type="entry name" value="Ribosomal protein S19"/>
    <property type="match status" value="1"/>
</dbReference>
<dbReference type="PROSITE" id="PS00323">
    <property type="entry name" value="RIBOSOMAL_S19"/>
    <property type="match status" value="1"/>
</dbReference>
<accession>A1REB8</accession>
<protein>
    <recommendedName>
        <fullName evidence="1">Small ribosomal subunit protein uS19</fullName>
    </recommendedName>
    <alternativeName>
        <fullName evidence="2">30S ribosomal protein S19</fullName>
    </alternativeName>
</protein>
<sequence>MPRSLKKGPFIDLHLLKKVEKAMEAGDKKPIKTWSRRSMIIPNMIGLTIAVHNGRQHVPVFVTDEMIGHKLGEFSPTRTYRGHAADKKAKKR</sequence>
<reference key="1">
    <citation type="submission" date="2006-12" db="EMBL/GenBank/DDBJ databases">
        <title>Complete sequence of Shewanella sp. W3-18-1.</title>
        <authorList>
            <consortium name="US DOE Joint Genome Institute"/>
            <person name="Copeland A."/>
            <person name="Lucas S."/>
            <person name="Lapidus A."/>
            <person name="Barry K."/>
            <person name="Detter J.C."/>
            <person name="Glavina del Rio T."/>
            <person name="Hammon N."/>
            <person name="Israni S."/>
            <person name="Dalin E."/>
            <person name="Tice H."/>
            <person name="Pitluck S."/>
            <person name="Chain P."/>
            <person name="Malfatti S."/>
            <person name="Shin M."/>
            <person name="Vergez L."/>
            <person name="Schmutz J."/>
            <person name="Larimer F."/>
            <person name="Land M."/>
            <person name="Hauser L."/>
            <person name="Kyrpides N."/>
            <person name="Lykidis A."/>
            <person name="Tiedje J."/>
            <person name="Richardson P."/>
        </authorList>
    </citation>
    <scope>NUCLEOTIDE SEQUENCE [LARGE SCALE GENOMIC DNA]</scope>
    <source>
        <strain>W3-18-1</strain>
    </source>
</reference>
<name>RS19_SHESW</name>
<organism>
    <name type="scientific">Shewanella sp. (strain W3-18-1)</name>
    <dbReference type="NCBI Taxonomy" id="351745"/>
    <lineage>
        <taxon>Bacteria</taxon>
        <taxon>Pseudomonadati</taxon>
        <taxon>Pseudomonadota</taxon>
        <taxon>Gammaproteobacteria</taxon>
        <taxon>Alteromonadales</taxon>
        <taxon>Shewanellaceae</taxon>
        <taxon>Shewanella</taxon>
    </lineage>
</organism>
<comment type="function">
    <text evidence="1">Protein S19 forms a complex with S13 that binds strongly to the 16S ribosomal RNA.</text>
</comment>
<comment type="similarity">
    <text evidence="1">Belongs to the universal ribosomal protein uS19 family.</text>
</comment>
<feature type="chain" id="PRO_1000051126" description="Small ribosomal subunit protein uS19">
    <location>
        <begin position="1"/>
        <end position="92"/>
    </location>
</feature>
<keyword id="KW-0687">Ribonucleoprotein</keyword>
<keyword id="KW-0689">Ribosomal protein</keyword>
<keyword id="KW-0694">RNA-binding</keyword>
<keyword id="KW-0699">rRNA-binding</keyword>
<evidence type="ECO:0000255" key="1">
    <source>
        <dbReference type="HAMAP-Rule" id="MF_00531"/>
    </source>
</evidence>
<evidence type="ECO:0000305" key="2"/>